<feature type="chain" id="PRO_0000082243" description="Taste receptor type 2 member 103">
    <location>
        <begin position="1"/>
        <end position="312"/>
    </location>
</feature>
<feature type="topological domain" description="Extracellular" evidence="1">
    <location>
        <begin position="1"/>
        <end position="6"/>
    </location>
</feature>
<feature type="transmembrane region" description="Helical; Name=1" evidence="1">
    <location>
        <begin position="7"/>
        <end position="27"/>
    </location>
</feature>
<feature type="topological domain" description="Cytoplasmic" evidence="1">
    <location>
        <begin position="28"/>
        <end position="61"/>
    </location>
</feature>
<feature type="transmembrane region" description="Helical; Name=2" evidence="1">
    <location>
        <begin position="62"/>
        <end position="82"/>
    </location>
</feature>
<feature type="topological domain" description="Extracellular" evidence="1">
    <location>
        <begin position="83"/>
        <end position="92"/>
    </location>
</feature>
<feature type="transmembrane region" description="Helical; Name=3" evidence="1">
    <location>
        <begin position="93"/>
        <end position="113"/>
    </location>
</feature>
<feature type="topological domain" description="Cytoplasmic" evidence="1">
    <location>
        <begin position="114"/>
        <end position="132"/>
    </location>
</feature>
<feature type="transmembrane region" description="Helical; Name=4" evidence="1">
    <location>
        <begin position="133"/>
        <end position="153"/>
    </location>
</feature>
<feature type="topological domain" description="Extracellular" evidence="1">
    <location>
        <begin position="154"/>
        <end position="185"/>
    </location>
</feature>
<feature type="transmembrane region" description="Helical; Name=5" evidence="1">
    <location>
        <begin position="186"/>
        <end position="206"/>
    </location>
</feature>
<feature type="topological domain" description="Cytoplasmic" evidence="1">
    <location>
        <begin position="207"/>
        <end position="229"/>
    </location>
</feature>
<feature type="transmembrane region" description="Helical; Name=6" evidence="1">
    <location>
        <begin position="230"/>
        <end position="250"/>
    </location>
</feature>
<feature type="topological domain" description="Extracellular" evidence="1">
    <location>
        <begin position="251"/>
        <end position="264"/>
    </location>
</feature>
<feature type="transmembrane region" description="Helical; Name=7" evidence="1">
    <location>
        <begin position="265"/>
        <end position="285"/>
    </location>
</feature>
<feature type="topological domain" description="Cytoplasmic" evidence="1">
    <location>
        <begin position="286"/>
        <end position="312"/>
    </location>
</feature>
<feature type="glycosylation site" description="N-linked (GlcNAc...) asparagine" evidence="1">
    <location>
        <position position="166"/>
    </location>
</feature>
<feature type="sequence conflict" description="In Ref. 1; AAF64509." evidence="2" ref="1">
    <original>Y</original>
    <variation>N</variation>
    <location>
        <position position="52"/>
    </location>
</feature>
<feature type="sequence conflict" description="In Ref. 1." evidence="2" ref="1">
    <location>
        <begin position="72"/>
        <end position="75"/>
    </location>
</feature>
<feature type="sequence conflict" description="In Ref. 1; AAF64509." evidence="2" ref="1">
    <original>V</original>
    <variation>A</variation>
    <location>
        <position position="125"/>
    </location>
</feature>
<feature type="sequence conflict" description="In Ref. 1; AAF64509." evidence="2" ref="1">
    <original>EA</original>
    <variation>KV</variation>
    <location>
        <begin position="129"/>
        <end position="130"/>
    </location>
</feature>
<feature type="sequence conflict" description="In Ref. 1; AAF64509." evidence="2" ref="1">
    <original>I</original>
    <variation>F</variation>
    <location>
        <position position="146"/>
    </location>
</feature>
<feature type="sequence conflict" description="In Ref. 1; AAF64509." evidence="2" ref="1">
    <original>T</original>
    <variation>S</variation>
    <location>
        <position position="172"/>
    </location>
</feature>
<feature type="sequence conflict" description="In Ref. 1; AAF64509." evidence="2" ref="1">
    <original>GL</original>
    <variation>RR</variation>
    <location>
        <begin position="177"/>
        <end position="178"/>
    </location>
</feature>
<feature type="sequence conflict" description="In Ref. 1; AAF64509." evidence="2" ref="1">
    <original>T</original>
    <variation>I</variation>
    <location>
        <position position="189"/>
    </location>
</feature>
<feature type="sequence conflict" description="In Ref. 1; AAF64509." evidence="2" ref="1">
    <original>C</original>
    <variation>H</variation>
    <location>
        <position position="213"/>
    </location>
</feature>
<feature type="sequence conflict" description="In Ref. 1; AAF64509." evidence="2" ref="1">
    <original>L</original>
    <variation>V</variation>
    <location>
        <position position="248"/>
    </location>
</feature>
<feature type="sequence conflict" description="In Ref. 1; AAF64509." evidence="2" ref="1">
    <original>LRSIGV</original>
    <variation>FTEYRR</variation>
    <location>
        <begin position="267"/>
        <end position="272"/>
    </location>
</feature>
<protein>
    <recommendedName>
        <fullName>Taste receptor type 2 member 103</fullName>
        <shortName>T2R103</shortName>
    </recommendedName>
    <alternativeName>
        <fullName>Taste receptor family B member 2</fullName>
        <shortName>TRB2</shortName>
    </alternativeName>
    <alternativeName>
        <fullName>Taste receptor type 2 member 10</fullName>
        <shortName>T2R10</shortName>
    </alternativeName>
</protein>
<comment type="function">
    <text>Gustducin-coupled receptor implicated in the perception of bitter compounds in the oral cavity and the gastrointestinal tract. Signals through PLCB2 and the calcium-regulated cation channel TRPM5.</text>
</comment>
<comment type="subcellular location">
    <subcellularLocation>
        <location>Membrane</location>
        <topology>Multi-pass membrane protein</topology>
    </subcellularLocation>
</comment>
<comment type="tissue specificity">
    <text>Expressed in subsets of taste receptor cells of the tongue and palate epithelium and exclusively in gustducin-positive cells. Expressed in 15% taste bud cells in circumvallate and foliate papillae but only in 2% in fungiform papillae.</text>
</comment>
<comment type="miscellaneous">
    <text>Several bitter taste receptors are expressed in a single taste receptor cell.</text>
</comment>
<comment type="similarity">
    <text evidence="2">Belongs to the G-protein coupled receptor T2R family.</text>
</comment>
<gene>
    <name type="primary">Tas2r103</name>
    <name type="synonym">Tas2r10</name>
</gene>
<proteinExistence type="evidence at transcript level"/>
<name>TR103_MOUSE</name>
<dbReference type="EMBL" id="AC152822">
    <property type="status" value="NOT_ANNOTATED_CDS"/>
    <property type="molecule type" value="Genomic_DNA"/>
</dbReference>
<dbReference type="EMBL" id="AF247732">
    <property type="protein sequence ID" value="AAF64509.1"/>
    <property type="molecule type" value="Genomic_DNA"/>
</dbReference>
<dbReference type="EMBL" id="BK001091">
    <property type="protein sequence ID" value="DAA01230.1"/>
    <property type="molecule type" value="Genomic_DNA"/>
</dbReference>
<dbReference type="CCDS" id="CCDS51933.1"/>
<dbReference type="RefSeq" id="NP_444441.1">
    <property type="nucleotide sequence ID" value="NM_053211.1"/>
</dbReference>
<dbReference type="SMR" id="Q9JKA3"/>
<dbReference type="FunCoup" id="Q9JKA3">
    <property type="interactions" value="88"/>
</dbReference>
<dbReference type="STRING" id="10090.ENSMUSP00000032317"/>
<dbReference type="GlyCosmos" id="Q9JKA3">
    <property type="glycosylation" value="1 site, No reported glycans"/>
</dbReference>
<dbReference type="GlyGen" id="Q9JKA3">
    <property type="glycosylation" value="1 site"/>
</dbReference>
<dbReference type="iPTMnet" id="Q9JKA3"/>
<dbReference type="PhosphoSitePlus" id="Q9JKA3"/>
<dbReference type="PaxDb" id="10090-ENSMUSP00000032317"/>
<dbReference type="Ensembl" id="ENSMUST00000032317.4">
    <property type="protein sequence ID" value="ENSMUSP00000032317.4"/>
    <property type="gene ID" value="ENSMUSG00000030196.4"/>
</dbReference>
<dbReference type="GeneID" id="667992"/>
<dbReference type="KEGG" id="mmu:667992"/>
<dbReference type="UCSC" id="uc012eug.1">
    <property type="organism name" value="mouse"/>
</dbReference>
<dbReference type="AGR" id="MGI:1890257"/>
<dbReference type="CTD" id="667992"/>
<dbReference type="MGI" id="MGI:1890257">
    <property type="gene designation" value="Tas2r103"/>
</dbReference>
<dbReference type="VEuPathDB" id="HostDB:ENSMUSG00000030196"/>
<dbReference type="eggNOG" id="ENOG502SKRK">
    <property type="taxonomic scope" value="Eukaryota"/>
</dbReference>
<dbReference type="GeneTree" id="ENSGT01100000263477"/>
<dbReference type="HOGENOM" id="CLU_072337_3_0_1"/>
<dbReference type="InParanoid" id="Q9JKA3"/>
<dbReference type="OMA" id="IAIDIQI"/>
<dbReference type="OrthoDB" id="8876749at2759"/>
<dbReference type="PhylomeDB" id="Q9JKA3"/>
<dbReference type="TreeFam" id="TF335891"/>
<dbReference type="BioGRID-ORCS" id="667992">
    <property type="hits" value="2 hits in 77 CRISPR screens"/>
</dbReference>
<dbReference type="PRO" id="PR:Q9JKA3"/>
<dbReference type="Proteomes" id="UP000000589">
    <property type="component" value="Chromosome 6"/>
</dbReference>
<dbReference type="RNAct" id="Q9JKA3">
    <property type="molecule type" value="protein"/>
</dbReference>
<dbReference type="GO" id="GO:0016020">
    <property type="term" value="C:membrane"/>
    <property type="evidence" value="ECO:0007669"/>
    <property type="project" value="UniProtKB-SubCell"/>
</dbReference>
<dbReference type="GO" id="GO:0033038">
    <property type="term" value="F:bitter taste receptor activity"/>
    <property type="evidence" value="ECO:0007669"/>
    <property type="project" value="InterPro"/>
</dbReference>
<dbReference type="GO" id="GO:0004930">
    <property type="term" value="F:G protein-coupled receptor activity"/>
    <property type="evidence" value="ECO:0007669"/>
    <property type="project" value="UniProtKB-KW"/>
</dbReference>
<dbReference type="CDD" id="cd15019">
    <property type="entry name" value="7tm_TAS2R14-like"/>
    <property type="match status" value="1"/>
</dbReference>
<dbReference type="FunFam" id="1.20.1070.10:FF:000042">
    <property type="entry name" value="Taste receptor type 2 member 7"/>
    <property type="match status" value="1"/>
</dbReference>
<dbReference type="Gene3D" id="1.20.1070.10">
    <property type="entry name" value="Rhodopsin 7-helix transmembrane proteins"/>
    <property type="match status" value="1"/>
</dbReference>
<dbReference type="InterPro" id="IPR017452">
    <property type="entry name" value="GPCR_Rhodpsn_7TM"/>
</dbReference>
<dbReference type="InterPro" id="IPR007960">
    <property type="entry name" value="TAS2R"/>
</dbReference>
<dbReference type="PANTHER" id="PTHR11394">
    <property type="entry name" value="TASTE RECEPTOR TYPE 2"/>
    <property type="match status" value="1"/>
</dbReference>
<dbReference type="PANTHER" id="PTHR11394:SF75">
    <property type="entry name" value="TASTE RECEPTOR TYPE 2 MEMBER 103"/>
    <property type="match status" value="1"/>
</dbReference>
<dbReference type="Pfam" id="PF05296">
    <property type="entry name" value="TAS2R"/>
    <property type="match status" value="1"/>
</dbReference>
<dbReference type="SUPFAM" id="SSF81321">
    <property type="entry name" value="Family A G protein-coupled receptor-like"/>
    <property type="match status" value="1"/>
</dbReference>
<dbReference type="PROSITE" id="PS50262">
    <property type="entry name" value="G_PROTEIN_RECEP_F1_2"/>
    <property type="match status" value="1"/>
</dbReference>
<keyword id="KW-0297">G-protein coupled receptor</keyword>
<keyword id="KW-0325">Glycoprotein</keyword>
<keyword id="KW-0472">Membrane</keyword>
<keyword id="KW-0675">Receptor</keyword>
<keyword id="KW-1185">Reference proteome</keyword>
<keyword id="KW-0716">Sensory transduction</keyword>
<keyword id="KW-0919">Taste</keyword>
<keyword id="KW-0807">Transducer</keyword>
<keyword id="KW-0812">Transmembrane</keyword>
<keyword id="KW-1133">Transmembrane helix</keyword>
<evidence type="ECO:0000255" key="1"/>
<evidence type="ECO:0000305" key="2"/>
<sequence length="312" mass="35156">MVLTIRAILWVTLITIISLEFIIGILGNVFIALVNIIDWVKRGKISAVDKTYMALAISRTAFLLSLITGFLVSLLDPALLGMRTMVRLLTISWMVTNHFSVWFATCLSIFYFLKIANFSNSIFLVLKWEAKKVVSVTLVVSVIILIMNIIVINKFTDRLQVNTLQNCSTSNTLKDYGLFLFISTGFTLTPFAVSLTMFLLLIFSLWRHLKNMCHSATGSRDVSTVAHIKGLQTVVTFLLLYTAFVMSLLSESLNINIQHTNLLSHFLRSIGVAFPTGHSCVLILGNSKLRQASLSVILWLRYKYKHIENWGP</sequence>
<organism>
    <name type="scientific">Mus musculus</name>
    <name type="common">Mouse</name>
    <dbReference type="NCBI Taxonomy" id="10090"/>
    <lineage>
        <taxon>Eukaryota</taxon>
        <taxon>Metazoa</taxon>
        <taxon>Chordata</taxon>
        <taxon>Craniata</taxon>
        <taxon>Vertebrata</taxon>
        <taxon>Euteleostomi</taxon>
        <taxon>Mammalia</taxon>
        <taxon>Eutheria</taxon>
        <taxon>Euarchontoglires</taxon>
        <taxon>Glires</taxon>
        <taxon>Rodentia</taxon>
        <taxon>Myomorpha</taxon>
        <taxon>Muroidea</taxon>
        <taxon>Muridae</taxon>
        <taxon>Murinae</taxon>
        <taxon>Mus</taxon>
        <taxon>Mus</taxon>
    </lineage>
</organism>
<accession>Q9JKA3</accession>
<accession>Q7M706</accession>
<reference key="1">
    <citation type="journal article" date="2009" name="PLoS Biol.">
        <title>Lineage-specific biology revealed by a finished genome assembly of the mouse.</title>
        <authorList>
            <person name="Church D.M."/>
            <person name="Goodstadt L."/>
            <person name="Hillier L.W."/>
            <person name="Zody M.C."/>
            <person name="Goldstein S."/>
            <person name="She X."/>
            <person name="Bult C.J."/>
            <person name="Agarwala R."/>
            <person name="Cherry J.L."/>
            <person name="DiCuccio M."/>
            <person name="Hlavina W."/>
            <person name="Kapustin Y."/>
            <person name="Meric P."/>
            <person name="Maglott D."/>
            <person name="Birtle Z."/>
            <person name="Marques A.C."/>
            <person name="Graves T."/>
            <person name="Zhou S."/>
            <person name="Teague B."/>
            <person name="Potamousis K."/>
            <person name="Churas C."/>
            <person name="Place M."/>
            <person name="Herschleb J."/>
            <person name="Runnheim R."/>
            <person name="Forrest D."/>
            <person name="Amos-Landgraf J."/>
            <person name="Schwartz D.C."/>
            <person name="Cheng Z."/>
            <person name="Lindblad-Toh K."/>
            <person name="Eichler E.E."/>
            <person name="Ponting C.P."/>
        </authorList>
    </citation>
    <scope>NUCLEOTIDE SEQUENCE [LARGE SCALE GENOMIC DNA]</scope>
    <source>
        <strain>C57BL/6J</strain>
    </source>
</reference>
<reference key="2">
    <citation type="journal article" date="2000" name="Nature">
        <title>A family of candidate taste receptors in human and mouse.</title>
        <authorList>
            <person name="Matsunami H."/>
            <person name="Montmayeur J.-P."/>
            <person name="Buck L.B."/>
        </authorList>
    </citation>
    <scope>NUCLEOTIDE SEQUENCE [GENOMIC DNA] OF 36-277</scope>
    <source>
        <strain>DBA/2J</strain>
    </source>
</reference>
<reference key="3">
    <citation type="journal article" date="2003" name="Mol. Biol. Evol.">
        <title>Adaptive diversification of bitter taste receptor genes in mammalian evolution.</title>
        <authorList>
            <person name="Shi P."/>
            <person name="Zhang J."/>
            <person name="Yang H."/>
            <person name="Zhang Y.-P."/>
        </authorList>
    </citation>
    <scope>IDENTIFICATION</scope>
</reference>
<reference key="4">
    <citation type="journal article" date="2002" name="Curr. Opin. Neurobiol.">
        <title>Receptors for bitter and sweet taste.</title>
        <authorList>
            <person name="Montmayeur J.-P."/>
            <person name="Matsunami H."/>
        </authorList>
    </citation>
    <scope>REVIEW</scope>
</reference>
<reference key="5">
    <citation type="journal article" date="2002" name="J. Biol. Chem.">
        <title>Molecular mechanisms of bitter and sweet taste transduction.</title>
        <authorList>
            <person name="Margolskee R.F."/>
        </authorList>
    </citation>
    <scope>REVIEW</scope>
</reference>
<reference key="6">
    <citation type="journal article" date="2003" name="Cell">
        <title>Coding of sweet, bitter, and umami tastes: different receptor cells sharing similar signaling pathways.</title>
        <authorList>
            <person name="Zhang Y."/>
            <person name="Hoon M.A."/>
            <person name="Chandrashekar J."/>
            <person name="Mueller K.L."/>
            <person name="Cook B."/>
            <person name="Wu D."/>
            <person name="Zuker C.S."/>
            <person name="Ryba N.J."/>
        </authorList>
    </citation>
    <scope>REVIEW</scope>
</reference>